<feature type="chain" id="PRO_0000316973" description="Protein Flattop">
    <location>
        <begin position="1"/>
        <end position="189"/>
    </location>
</feature>
<feature type="region of interest" description="Disordered" evidence="3">
    <location>
        <begin position="112"/>
        <end position="189"/>
    </location>
</feature>
<feature type="compositionally biased region" description="Polar residues" evidence="3">
    <location>
        <begin position="137"/>
        <end position="148"/>
    </location>
</feature>
<feature type="compositionally biased region" description="Pro residues" evidence="3">
    <location>
        <begin position="178"/>
        <end position="189"/>
    </location>
</feature>
<reference key="1">
    <citation type="journal article" date="2005" name="Science">
        <title>The transcriptional landscape of the mammalian genome.</title>
        <authorList>
            <person name="Carninci P."/>
            <person name="Kasukawa T."/>
            <person name="Katayama S."/>
            <person name="Gough J."/>
            <person name="Frith M.C."/>
            <person name="Maeda N."/>
            <person name="Oyama R."/>
            <person name="Ravasi T."/>
            <person name="Lenhard B."/>
            <person name="Wells C."/>
            <person name="Kodzius R."/>
            <person name="Shimokawa K."/>
            <person name="Bajic V.B."/>
            <person name="Brenner S.E."/>
            <person name="Batalov S."/>
            <person name="Forrest A.R."/>
            <person name="Zavolan M."/>
            <person name="Davis M.J."/>
            <person name="Wilming L.G."/>
            <person name="Aidinis V."/>
            <person name="Allen J.E."/>
            <person name="Ambesi-Impiombato A."/>
            <person name="Apweiler R."/>
            <person name="Aturaliya R.N."/>
            <person name="Bailey T.L."/>
            <person name="Bansal M."/>
            <person name="Baxter L."/>
            <person name="Beisel K.W."/>
            <person name="Bersano T."/>
            <person name="Bono H."/>
            <person name="Chalk A.M."/>
            <person name="Chiu K.P."/>
            <person name="Choudhary V."/>
            <person name="Christoffels A."/>
            <person name="Clutterbuck D.R."/>
            <person name="Crowe M.L."/>
            <person name="Dalla E."/>
            <person name="Dalrymple B.P."/>
            <person name="de Bono B."/>
            <person name="Della Gatta G."/>
            <person name="di Bernardo D."/>
            <person name="Down T."/>
            <person name="Engstrom P."/>
            <person name="Fagiolini M."/>
            <person name="Faulkner G."/>
            <person name="Fletcher C.F."/>
            <person name="Fukushima T."/>
            <person name="Furuno M."/>
            <person name="Futaki S."/>
            <person name="Gariboldi M."/>
            <person name="Georgii-Hemming P."/>
            <person name="Gingeras T.R."/>
            <person name="Gojobori T."/>
            <person name="Green R.E."/>
            <person name="Gustincich S."/>
            <person name="Harbers M."/>
            <person name="Hayashi Y."/>
            <person name="Hensch T.K."/>
            <person name="Hirokawa N."/>
            <person name="Hill D."/>
            <person name="Huminiecki L."/>
            <person name="Iacono M."/>
            <person name="Ikeo K."/>
            <person name="Iwama A."/>
            <person name="Ishikawa T."/>
            <person name="Jakt M."/>
            <person name="Kanapin A."/>
            <person name="Katoh M."/>
            <person name="Kawasawa Y."/>
            <person name="Kelso J."/>
            <person name="Kitamura H."/>
            <person name="Kitano H."/>
            <person name="Kollias G."/>
            <person name="Krishnan S.P."/>
            <person name="Kruger A."/>
            <person name="Kummerfeld S.K."/>
            <person name="Kurochkin I.V."/>
            <person name="Lareau L.F."/>
            <person name="Lazarevic D."/>
            <person name="Lipovich L."/>
            <person name="Liu J."/>
            <person name="Liuni S."/>
            <person name="McWilliam S."/>
            <person name="Madan Babu M."/>
            <person name="Madera M."/>
            <person name="Marchionni L."/>
            <person name="Matsuda H."/>
            <person name="Matsuzawa S."/>
            <person name="Miki H."/>
            <person name="Mignone F."/>
            <person name="Miyake S."/>
            <person name="Morris K."/>
            <person name="Mottagui-Tabar S."/>
            <person name="Mulder N."/>
            <person name="Nakano N."/>
            <person name="Nakauchi H."/>
            <person name="Ng P."/>
            <person name="Nilsson R."/>
            <person name="Nishiguchi S."/>
            <person name="Nishikawa S."/>
            <person name="Nori F."/>
            <person name="Ohara O."/>
            <person name="Okazaki Y."/>
            <person name="Orlando V."/>
            <person name="Pang K.C."/>
            <person name="Pavan W.J."/>
            <person name="Pavesi G."/>
            <person name="Pesole G."/>
            <person name="Petrovsky N."/>
            <person name="Piazza S."/>
            <person name="Reed J."/>
            <person name="Reid J.F."/>
            <person name="Ring B.Z."/>
            <person name="Ringwald M."/>
            <person name="Rost B."/>
            <person name="Ruan Y."/>
            <person name="Salzberg S.L."/>
            <person name="Sandelin A."/>
            <person name="Schneider C."/>
            <person name="Schoenbach C."/>
            <person name="Sekiguchi K."/>
            <person name="Semple C.A."/>
            <person name="Seno S."/>
            <person name="Sessa L."/>
            <person name="Sheng Y."/>
            <person name="Shibata Y."/>
            <person name="Shimada H."/>
            <person name="Shimada K."/>
            <person name="Silva D."/>
            <person name="Sinclair B."/>
            <person name="Sperling S."/>
            <person name="Stupka E."/>
            <person name="Sugiura K."/>
            <person name="Sultana R."/>
            <person name="Takenaka Y."/>
            <person name="Taki K."/>
            <person name="Tammoja K."/>
            <person name="Tan S.L."/>
            <person name="Tang S."/>
            <person name="Taylor M.S."/>
            <person name="Tegner J."/>
            <person name="Teichmann S.A."/>
            <person name="Ueda H.R."/>
            <person name="van Nimwegen E."/>
            <person name="Verardo R."/>
            <person name="Wei C.L."/>
            <person name="Yagi K."/>
            <person name="Yamanishi H."/>
            <person name="Zabarovsky E."/>
            <person name="Zhu S."/>
            <person name="Zimmer A."/>
            <person name="Hide W."/>
            <person name="Bult C."/>
            <person name="Grimmond S.M."/>
            <person name="Teasdale R.D."/>
            <person name="Liu E.T."/>
            <person name="Brusic V."/>
            <person name="Quackenbush J."/>
            <person name="Wahlestedt C."/>
            <person name="Mattick J.S."/>
            <person name="Hume D.A."/>
            <person name="Kai C."/>
            <person name="Sasaki D."/>
            <person name="Tomaru Y."/>
            <person name="Fukuda S."/>
            <person name="Kanamori-Katayama M."/>
            <person name="Suzuki M."/>
            <person name="Aoki J."/>
            <person name="Arakawa T."/>
            <person name="Iida J."/>
            <person name="Imamura K."/>
            <person name="Itoh M."/>
            <person name="Kato T."/>
            <person name="Kawaji H."/>
            <person name="Kawagashira N."/>
            <person name="Kawashima T."/>
            <person name="Kojima M."/>
            <person name="Kondo S."/>
            <person name="Konno H."/>
            <person name="Nakano K."/>
            <person name="Ninomiya N."/>
            <person name="Nishio T."/>
            <person name="Okada M."/>
            <person name="Plessy C."/>
            <person name="Shibata K."/>
            <person name="Shiraki T."/>
            <person name="Suzuki S."/>
            <person name="Tagami M."/>
            <person name="Waki K."/>
            <person name="Watahiki A."/>
            <person name="Okamura-Oho Y."/>
            <person name="Suzuki H."/>
            <person name="Kawai J."/>
            <person name="Hayashizaki Y."/>
        </authorList>
    </citation>
    <scope>NUCLEOTIDE SEQUENCE [LARGE SCALE MRNA]</scope>
    <source>
        <strain>C57BL/6J</strain>
        <tissue>Testis</tissue>
    </source>
</reference>
<reference key="2">
    <citation type="journal article" date="2004" name="Genome Res.">
        <title>The status, quality, and expansion of the NIH full-length cDNA project: the Mammalian Gene Collection (MGC).</title>
        <authorList>
            <consortium name="The MGC Project Team"/>
        </authorList>
    </citation>
    <scope>NUCLEOTIDE SEQUENCE [LARGE SCALE MRNA]</scope>
    <source>
        <tissue>Testis</tissue>
    </source>
</reference>
<reference key="3">
    <citation type="journal article" date="2012" name="Differentiation">
        <title>Fltp(T2AiCre): a new knock-in mouse line for conditional gene targeting in distinct mono- and multiciliated tissues.</title>
        <authorList>
            <person name="Lange A."/>
            <person name="Gegg M."/>
            <person name="Burtscher I."/>
            <person name="Bengel D."/>
            <person name="Kremmer E."/>
            <person name="Lickert H."/>
        </authorList>
    </citation>
    <scope>TISSUE SPECIFICITY</scope>
    <scope>DEVELOPMENTAL STAGE</scope>
</reference>
<reference key="4">
    <citation type="journal article" date="2014" name="Elife">
        <title>Flattop regulates basal body docking and positioning in mono- and multiciliated cells.</title>
        <authorList>
            <person name="Gegg M."/>
            <person name="Boettcher A."/>
            <person name="Burtscher I."/>
            <person name="Hasenoeder S."/>
            <person name="Van Campenhout C."/>
            <person name="Aichler M."/>
            <person name="Walch A."/>
            <person name="Grant S.G."/>
            <person name="Lickert H."/>
        </authorList>
    </citation>
    <scope>FUNCTION</scope>
    <scope>SUBCELLULAR LOCATION</scope>
    <scope>TISSUE SPECIFICITY</scope>
    <scope>DEVELOPMENTAL STAGE</scope>
    <scope>DISRUPTION PHENOTYPE</scope>
    <scope>INTERACTION WITH DLG3</scope>
</reference>
<reference evidence="14" key="5">
    <citation type="journal article" date="2023" name="Cell">
        <title>Structures of sperm flagellar doublet microtubules expand the genetic spectrum of male infertility.</title>
        <authorList>
            <person name="Zhou L."/>
            <person name="Liu H."/>
            <person name="Liu S."/>
            <person name="Yang X."/>
            <person name="Dong Y."/>
            <person name="Pan Y."/>
            <person name="Xiao Z."/>
            <person name="Zheng B."/>
            <person name="Sun Y."/>
            <person name="Huang P."/>
            <person name="Zhang X."/>
            <person name="Hu J."/>
            <person name="Sun R."/>
            <person name="Feng S."/>
            <person name="Zhu Y."/>
            <person name="Liu M."/>
            <person name="Gui M."/>
            <person name="Wu J."/>
        </authorList>
    </citation>
    <scope>STRUCTURE BY ELECTRON MICROSCOPY (3.50 ANGSTROMS) OF SPERM FLAGELLAR DOUBLET MICROTUBULES</scope>
    <scope>FUNCTION</scope>
    <scope>SUBCELLULAR LOCATION</scope>
    <scope>SUBUNIT</scope>
</reference>
<reference evidence="15" key="6">
    <citation type="journal article" date="2023" name="Cell">
        <title>De novo protein identification in mammalian sperm using in situ cryoelectron tomography and AlphaFold2 docking.</title>
        <authorList>
            <person name="Chen Z."/>
            <person name="Shiozaki M."/>
            <person name="Haas K.M."/>
            <person name="Skinner W.M."/>
            <person name="Zhao S."/>
            <person name="Guo C."/>
            <person name="Polacco B.J."/>
            <person name="Yu Z."/>
            <person name="Krogan N.J."/>
            <person name="Lishko P.V."/>
            <person name="Kaake R.M."/>
            <person name="Vale R.D."/>
            <person name="Agard D.A."/>
        </authorList>
    </citation>
    <scope>STRUCTURE BY ELECTRON MICROSCOPY (7.70 ANGSTROMS) OF SPERM FLAGELLAR DOUBLET MICROTUBULES</scope>
    <scope>FUNCTION</scope>
    <scope>SUBCELLULAR LOCATION</scope>
    <scope>SUBUNIT</scope>
</reference>
<reference evidence="12 13" key="7">
    <citation type="journal article" date="2023" name="Cell Discov.">
        <title>In-cell structural insight into the stability of sperm microtubule doublet.</title>
        <authorList>
            <person name="Tai L."/>
            <person name="Yin G."/>
            <person name="Huang X."/>
            <person name="Sun F."/>
            <person name="Zhu Y."/>
        </authorList>
    </citation>
    <scope>STRUCTURE BY ELECTRON MICROSCOPY (4.50 ANGSTROMS)</scope>
    <scope>FUNCTION</scope>
    <scope>SUBUNIT</scope>
    <scope>SUBCELLULAR LOCATION</scope>
</reference>
<organism>
    <name type="scientific">Mus musculus</name>
    <name type="common">Mouse</name>
    <dbReference type="NCBI Taxonomy" id="10090"/>
    <lineage>
        <taxon>Eukaryota</taxon>
        <taxon>Metazoa</taxon>
        <taxon>Chordata</taxon>
        <taxon>Craniata</taxon>
        <taxon>Vertebrata</taxon>
        <taxon>Euteleostomi</taxon>
        <taxon>Mammalia</taxon>
        <taxon>Eutheria</taxon>
        <taxon>Euarchontoglires</taxon>
        <taxon>Glires</taxon>
        <taxon>Rodentia</taxon>
        <taxon>Myomorpha</taxon>
        <taxon>Muroidea</taxon>
        <taxon>Muridae</taxon>
        <taxon>Murinae</taxon>
        <taxon>Mus</taxon>
        <taxon>Mus</taxon>
    </lineage>
</organism>
<comment type="function">
    <text evidence="2 5 6 7 8">Microtubule inner protein (MIP) part of the dynein-decorated doublet microtubules (DMTs) in cilia axoneme (PubMed:25296022, PubMed:37295417, PubMed:37865089, PubMed:37989994). Acts as a regulator of cilium basal body docking and positioning in mono- and multiciliated cells (PubMed:25296022). Regulates basal body docking and cilia formation in multiciliated lung cells (PubMed:25296022). Regulates kinocilium positioning and stereocilia bundle morphogenesis in the inner ear (By similarity).</text>
</comment>
<comment type="subunit">
    <text evidence="5 6 7 8">Microtubule inner protein component of sperm flagellar doublet microtubules (PubMed:37295417, PubMed:37865089, PubMed:37989994). Interacts with DLG3 (PubMed:25296022).</text>
</comment>
<comment type="subcellular location">
    <subcellularLocation>
        <location evidence="5">Cytoplasm</location>
        <location evidence="5">Cytoskeleton</location>
        <location evidence="5">Cilium basal body</location>
    </subcellularLocation>
    <subcellularLocation>
        <location evidence="5">Cytoplasm</location>
        <location evidence="5">Cytoskeleton</location>
        <location evidence="5">Cilium axoneme</location>
    </subcellularLocation>
    <subcellularLocation>
        <location evidence="6 7 8">Cytoplasm</location>
        <location evidence="6 7 8">Cytoskeleton</location>
        <location evidence="6 7 8">Flagellum axoneme</location>
    </subcellularLocation>
    <subcellularLocation>
        <location evidence="5">Apical cell membrane</location>
    </subcellularLocation>
    <text evidence="1 5">Localizes to the apical cell membrane, the basal body and the primary cilium in monociliated node cells.</text>
</comment>
<comment type="tissue specificity">
    <text evidence="4 5">Expressed in mono- and multiciliated tissues during planar cell polarity acquisition.</text>
</comment>
<comment type="developmental stage">
    <text evidence="4 5">First detected in the embryonic node at 7.5 dpc. At 8.5-13.5 dpc, strong expression is detected in tissues that are either mono- or multiciliated, such as the eye, notochord, floor plate of the neural tube and all 4 choroid plexi. Expressed during development and early postnatal life in all 6 sensory regions of the inner ear.</text>
</comment>
<comment type="disruption phenotype">
    <text evidence="5">mice were born at the expected Mendelian ratio and are viable and fertile but show basal body docking and ciliogenesis defects in multiciliated lung cells.</text>
</comment>
<comment type="similarity">
    <text evidence="10">Belongs to the Flattop family.</text>
</comment>
<comment type="sequence caution" evidence="10">
    <conflict type="frameshift">
        <sequence resource="EMBL-CDS" id="BAB24245"/>
    </conflict>
</comment>
<evidence type="ECO:0000250" key="1">
    <source>
        <dbReference type="UniProtKB" id="Q3SZT6"/>
    </source>
</evidence>
<evidence type="ECO:0000250" key="2">
    <source>
        <dbReference type="UniProtKB" id="Q5VTH2"/>
    </source>
</evidence>
<evidence type="ECO:0000256" key="3">
    <source>
        <dbReference type="SAM" id="MobiDB-lite"/>
    </source>
</evidence>
<evidence type="ECO:0000269" key="4">
    <source>
    </source>
</evidence>
<evidence type="ECO:0000269" key="5">
    <source>
    </source>
</evidence>
<evidence type="ECO:0000269" key="6">
    <source>
    </source>
</evidence>
<evidence type="ECO:0000269" key="7">
    <source>
    </source>
</evidence>
<evidence type="ECO:0000269" key="8">
    <source>
    </source>
</evidence>
<evidence type="ECO:0000303" key="9">
    <source>
    </source>
</evidence>
<evidence type="ECO:0000305" key="10"/>
<evidence type="ECO:0000312" key="11">
    <source>
        <dbReference type="MGI" id="MGI:1922722"/>
    </source>
</evidence>
<evidence type="ECO:0007744" key="12">
    <source>
        <dbReference type="PDB" id="8I7O"/>
    </source>
</evidence>
<evidence type="ECO:0007744" key="13">
    <source>
        <dbReference type="PDB" id="8I7R"/>
    </source>
</evidence>
<evidence type="ECO:0007744" key="14">
    <source>
        <dbReference type="PDB" id="8IYJ"/>
    </source>
</evidence>
<evidence type="ECO:0007744" key="15">
    <source>
        <dbReference type="PDB" id="8TO0"/>
    </source>
</evidence>
<accession>Q6P8X9</accession>
<accession>Q9DAJ1</accession>
<dbReference type="EMBL" id="AK005804">
    <property type="protein sequence ID" value="BAB24245.1"/>
    <property type="status" value="ALT_FRAME"/>
    <property type="molecule type" value="mRNA"/>
</dbReference>
<dbReference type="EMBL" id="BC061017">
    <property type="protein sequence ID" value="AAH61017.1"/>
    <property type="molecule type" value="mRNA"/>
</dbReference>
<dbReference type="CCDS" id="CCDS35771.1"/>
<dbReference type="RefSeq" id="NP_001074744.1">
    <property type="nucleotide sequence ID" value="NM_001081275.2"/>
</dbReference>
<dbReference type="RefSeq" id="NP_001366355.1">
    <property type="nucleotide sequence ID" value="NM_001379426.2"/>
</dbReference>
<dbReference type="RefSeq" id="NP_001366356.1">
    <property type="nucleotide sequence ID" value="NM_001379427.1"/>
</dbReference>
<dbReference type="RefSeq" id="XP_006497081.1">
    <property type="nucleotide sequence ID" value="XM_006497018.2"/>
</dbReference>
<dbReference type="RefSeq" id="XP_006497082.1">
    <property type="nucleotide sequence ID" value="XM_006497019.3"/>
</dbReference>
<dbReference type="RefSeq" id="XP_006497083.1">
    <property type="nucleotide sequence ID" value="XM_006497020.2"/>
</dbReference>
<dbReference type="RefSeq" id="XP_017168085.1">
    <property type="nucleotide sequence ID" value="XM_017312596.1"/>
</dbReference>
<dbReference type="PDB" id="8I7O">
    <property type="method" value="EM"/>
    <property type="resolution" value="4.50 A"/>
    <property type="chains" value="O1/O2=1-189"/>
</dbReference>
<dbReference type="PDB" id="8I7R">
    <property type="method" value="EM"/>
    <property type="resolution" value="6.50 A"/>
    <property type="chains" value="O1/O2/O3=1-189"/>
</dbReference>
<dbReference type="PDB" id="8IYJ">
    <property type="method" value="EM"/>
    <property type="resolution" value="3.50 A"/>
    <property type="chains" value="i1/l/m/n=1-189"/>
</dbReference>
<dbReference type="PDB" id="8TO0">
    <property type="method" value="EM"/>
    <property type="resolution" value="7.70 A"/>
    <property type="chains" value="C5/DJ/DY=1-189"/>
</dbReference>
<dbReference type="PDBsum" id="8I7O"/>
<dbReference type="PDBsum" id="8I7R"/>
<dbReference type="PDBsum" id="8IYJ"/>
<dbReference type="PDBsum" id="8TO0"/>
<dbReference type="EMDB" id="EMD-35229"/>
<dbReference type="EMDB" id="EMD-35230"/>
<dbReference type="EMDB" id="EMD-35823"/>
<dbReference type="EMDB" id="EMD-41431"/>
<dbReference type="SMR" id="Q6P8X9"/>
<dbReference type="FunCoup" id="Q6P8X9">
    <property type="interactions" value="46"/>
</dbReference>
<dbReference type="STRING" id="10090.ENSMUSP00000027959"/>
<dbReference type="PhosphoSitePlus" id="Q6P8X9"/>
<dbReference type="PaxDb" id="10090-ENSMUSP00000027959"/>
<dbReference type="ProteomicsDB" id="271775"/>
<dbReference type="Antibodypedia" id="50104">
    <property type="antibodies" value="46 antibodies from 10 providers"/>
</dbReference>
<dbReference type="DNASU" id="75472"/>
<dbReference type="Ensembl" id="ENSMUST00000027959.11">
    <property type="protein sequence ID" value="ENSMUSP00000027959.5"/>
    <property type="gene ID" value="ENSMUSG00000026649.15"/>
</dbReference>
<dbReference type="GeneID" id="75472"/>
<dbReference type="KEGG" id="mmu:75472"/>
<dbReference type="UCSC" id="uc007dna.1">
    <property type="organism name" value="mouse"/>
</dbReference>
<dbReference type="AGR" id="MGI:1922722"/>
<dbReference type="CTD" id="257177"/>
<dbReference type="MGI" id="MGI:1922722">
    <property type="gene designation" value="Cfap126"/>
</dbReference>
<dbReference type="VEuPathDB" id="HostDB:ENSMUSG00000026649"/>
<dbReference type="eggNOG" id="ENOG502S5M4">
    <property type="taxonomic scope" value="Eukaryota"/>
</dbReference>
<dbReference type="GeneTree" id="ENSGT00390000001092"/>
<dbReference type="InParanoid" id="Q6P8X9"/>
<dbReference type="OMA" id="TFMGTWQ"/>
<dbReference type="TreeFam" id="TF329474"/>
<dbReference type="BioGRID-ORCS" id="75472">
    <property type="hits" value="0 hits in 76 CRISPR screens"/>
</dbReference>
<dbReference type="PRO" id="PR:Q6P8X9"/>
<dbReference type="Proteomes" id="UP000000589">
    <property type="component" value="Chromosome 1"/>
</dbReference>
<dbReference type="RNAct" id="Q6P8X9">
    <property type="molecule type" value="protein"/>
</dbReference>
<dbReference type="Bgee" id="ENSMUSG00000026649">
    <property type="expression patterns" value="Expressed in olfactory epithelium and 149 other cell types or tissues"/>
</dbReference>
<dbReference type="ExpressionAtlas" id="Q6P8X9">
    <property type="expression patterns" value="baseline and differential"/>
</dbReference>
<dbReference type="GO" id="GO:0016324">
    <property type="term" value="C:apical plasma membrane"/>
    <property type="evidence" value="ECO:0000314"/>
    <property type="project" value="UniProtKB"/>
</dbReference>
<dbReference type="GO" id="GO:0160112">
    <property type="term" value="C:axonemal B tubule inner sheath"/>
    <property type="evidence" value="ECO:0000314"/>
    <property type="project" value="UniProtKB"/>
</dbReference>
<dbReference type="GO" id="GO:0005879">
    <property type="term" value="C:axonemal microtubule"/>
    <property type="evidence" value="ECO:0000250"/>
    <property type="project" value="UniProtKB"/>
</dbReference>
<dbReference type="GO" id="GO:0036064">
    <property type="term" value="C:ciliary basal body"/>
    <property type="evidence" value="ECO:0000314"/>
    <property type="project" value="UniProtKB"/>
</dbReference>
<dbReference type="GO" id="GO:0005929">
    <property type="term" value="C:cilium"/>
    <property type="evidence" value="ECO:0000314"/>
    <property type="project" value="UniProtKB"/>
</dbReference>
<dbReference type="GO" id="GO:0036126">
    <property type="term" value="C:sperm flagellum"/>
    <property type="evidence" value="ECO:0000314"/>
    <property type="project" value="UniProtKB"/>
</dbReference>
<dbReference type="GO" id="GO:0044782">
    <property type="term" value="P:cilium organization"/>
    <property type="evidence" value="ECO:0000315"/>
    <property type="project" value="UniProtKB"/>
</dbReference>
<dbReference type="GO" id="GO:0030317">
    <property type="term" value="P:flagellated sperm motility"/>
    <property type="evidence" value="ECO:0000314"/>
    <property type="project" value="UniProtKB"/>
</dbReference>
<dbReference type="CDD" id="cd23705">
    <property type="entry name" value="Flattop"/>
    <property type="match status" value="1"/>
</dbReference>
<dbReference type="InterPro" id="IPR038797">
    <property type="entry name" value="Fltp"/>
</dbReference>
<dbReference type="PANTHER" id="PTHR34639">
    <property type="entry name" value="PROTEIN FLATTOP"/>
    <property type="match status" value="1"/>
</dbReference>
<dbReference type="PANTHER" id="PTHR34639:SF1">
    <property type="entry name" value="PROTEIN FLATTOP"/>
    <property type="match status" value="1"/>
</dbReference>
<dbReference type="Pfam" id="PF22611">
    <property type="entry name" value="CFAP126"/>
    <property type="match status" value="1"/>
</dbReference>
<sequence>MATNYSANQYEKAYLPTYLQNWSPARPTKEKIAAHEGYTQIIANDRGHLLPSVPRSKASPWGSFMGTWQMPLKIPPAKVTLTARTTTAADNLTKWIHKNPDLLNACNGLRPEISGKPFDPDSQTKQKKSVTKTVQQAPNPTIIPSSPVIQGDNPDEPQSSHPSAGHTPGPQTPVNSPNNPPPSPCKSTK</sequence>
<name>FLTOP_MOUSE</name>
<keyword id="KW-0002">3D-structure</keyword>
<keyword id="KW-1003">Cell membrane</keyword>
<keyword id="KW-0966">Cell projection</keyword>
<keyword id="KW-0969">Cilium</keyword>
<keyword id="KW-0970">Cilium biogenesis/degradation</keyword>
<keyword id="KW-0963">Cytoplasm</keyword>
<keyword id="KW-0206">Cytoskeleton</keyword>
<keyword id="KW-0282">Flagellum</keyword>
<keyword id="KW-0472">Membrane</keyword>
<keyword id="KW-1185">Reference proteome</keyword>
<proteinExistence type="evidence at protein level"/>
<protein>
    <recommendedName>
        <fullName evidence="10">Protein Flattop</fullName>
    </recommendedName>
    <alternativeName>
        <fullName evidence="11">Cilia- and flagella-associated protein 126</fullName>
    </alternativeName>
</protein>
<gene>
    <name evidence="11" type="primary">Cfap126</name>
    <name evidence="9" type="synonym">Fltp</name>
</gene>